<comment type="function">
    <text evidence="1">May be involved in transcriptional regulation.</text>
</comment>
<comment type="subcellular location">
    <subcellularLocation>
        <location evidence="1">Nucleus</location>
    </subcellularLocation>
</comment>
<comment type="similarity">
    <text evidence="5">Belongs to the krueppel C2H2-type zinc-finger protein family.</text>
</comment>
<feature type="chain" id="PRO_0000348469" description="Zinc finger protein 184">
    <location>
        <begin position="1"/>
        <end position="737"/>
    </location>
</feature>
<feature type="domain" description="KRAB" evidence="4">
    <location>
        <begin position="28"/>
        <end position="99"/>
    </location>
</feature>
<feature type="zinc finger region" description="C2H2-type 1" evidence="3">
    <location>
        <begin position="201"/>
        <end position="223"/>
    </location>
</feature>
<feature type="zinc finger region" description="C2H2-type 2" evidence="3">
    <location>
        <begin position="229"/>
        <end position="251"/>
    </location>
</feature>
<feature type="zinc finger region" description="C2H2-type 3" evidence="3">
    <location>
        <begin position="257"/>
        <end position="279"/>
    </location>
</feature>
<feature type="zinc finger region" description="C2H2-type 4" evidence="3">
    <location>
        <begin position="285"/>
        <end position="307"/>
    </location>
</feature>
<feature type="zinc finger region" description="C2H2-type 5" evidence="3">
    <location>
        <begin position="313"/>
        <end position="335"/>
    </location>
</feature>
<feature type="zinc finger region" description="C2H2-type 6" evidence="3">
    <location>
        <begin position="341"/>
        <end position="363"/>
    </location>
</feature>
<feature type="zinc finger region" description="C2H2-type 7" evidence="3">
    <location>
        <begin position="369"/>
        <end position="391"/>
    </location>
</feature>
<feature type="zinc finger region" description="C2H2-type 8" evidence="3">
    <location>
        <begin position="397"/>
        <end position="419"/>
    </location>
</feature>
<feature type="zinc finger region" description="C2H2-type 9" evidence="3">
    <location>
        <begin position="425"/>
        <end position="447"/>
    </location>
</feature>
<feature type="zinc finger region" description="C2H2-type 10" evidence="3">
    <location>
        <begin position="453"/>
        <end position="475"/>
    </location>
</feature>
<feature type="zinc finger region" description="C2H2-type 11" evidence="3">
    <location>
        <begin position="481"/>
        <end position="503"/>
    </location>
</feature>
<feature type="zinc finger region" description="C2H2-type 12" evidence="3">
    <location>
        <begin position="509"/>
        <end position="531"/>
    </location>
</feature>
<feature type="zinc finger region" description="C2H2-type 13" evidence="3">
    <location>
        <begin position="537"/>
        <end position="559"/>
    </location>
</feature>
<feature type="zinc finger region" description="C2H2-type 14" evidence="3">
    <location>
        <begin position="565"/>
        <end position="587"/>
    </location>
</feature>
<feature type="zinc finger region" description="C2H2-type 15" evidence="3">
    <location>
        <begin position="593"/>
        <end position="615"/>
    </location>
</feature>
<feature type="zinc finger region" description="C2H2-type 16" evidence="3">
    <location>
        <begin position="621"/>
        <end position="643"/>
    </location>
</feature>
<feature type="zinc finger region" description="C2H2-type 17" evidence="3">
    <location>
        <begin position="649"/>
        <end position="671"/>
    </location>
</feature>
<feature type="zinc finger region" description="C2H2-type 18; degenerate" evidence="3">
    <location>
        <begin position="677"/>
        <end position="698"/>
    </location>
</feature>
<feature type="zinc finger region" description="C2H2-type 19" evidence="3">
    <location>
        <begin position="704"/>
        <end position="726"/>
    </location>
</feature>
<feature type="modified residue" description="Phosphoserine" evidence="2">
    <location>
        <position position="117"/>
    </location>
</feature>
<feature type="cross-link" description="Glycyl lysine isopeptide (Lys-Gly) (interchain with G-Cter in SUMO2)" evidence="2">
    <location>
        <position position="185"/>
    </location>
</feature>
<gene>
    <name type="primary">Zfp184</name>
</gene>
<name>ZN184_MOUSE</name>
<protein>
    <recommendedName>
        <fullName>Zinc finger protein 184</fullName>
    </recommendedName>
</protein>
<proteinExistence type="evidence at transcript level"/>
<sequence length="737" mass="84027">MAGLSFADSASLHEGRPLLLPSSFRESVTFKDVVVNFTQEEWKHLDPIQRDLFRDVTLENYTHLVSIGLQVSKPDMISQLEQGTEPWTEDSCIPVGPLEDWKKRAGNSVSSLELDISEEHLFSETVVTNSKRDDGSLEKLQANQQMLPREVQITEKTAPTCESNLSVSSSFITQTEVALDQPSTKTRAKQNSHPVKKEKLCKCNECGKAFTYCSALIRHQRTHTGEKPYKCNECNKAFSRSENLINHQRIHTGDKPYKCDQCGKGFIEGPSLTQHQRIHTGEKPYKCDECGKAFSQRTHLVQHQRIHTGEKPYTCTECGKSFSQRGHFMEHQKIHTGEKPFKCEECEKTFTRSTHLTQHQKIHTGEKTYKCNECGKAFNGPSTFIRHHMIHTGEKPYECNECGKAFSQHSNLTQHQKTHTGEKPYDCAECGKAFSYWSSLAQHLKIHTGEKPYKCSDCGKAFSYCSSLTQHRRIHTREKPFECSECGKAFSYLSNLNQHQKTHTQEKAYECKECGKAFIRSSSLAKHERIHTGEKPYQCHECGKTFSYGSSLIQHKKIHTGERPYKCNECGRAFNQKIHLTQHKRIHTGAKPYACPKCGKTFRHCSSLAQHQKTHTEEKPYQCNKCEKTFSQNSRLTQHQRIHTGEKPYKCSECDKCFTGSVHLTEHRSTHTGEKPYNSECPQTFSQSTYLTQHQKIHSGEKLLGCEDCEKAFQCHSALTKHQRLHPAVAAVGTSLT</sequence>
<keyword id="KW-0238">DNA-binding</keyword>
<keyword id="KW-1017">Isopeptide bond</keyword>
<keyword id="KW-0479">Metal-binding</keyword>
<keyword id="KW-0539">Nucleus</keyword>
<keyword id="KW-0597">Phosphoprotein</keyword>
<keyword id="KW-1185">Reference proteome</keyword>
<keyword id="KW-0677">Repeat</keyword>
<keyword id="KW-0804">Transcription</keyword>
<keyword id="KW-0805">Transcription regulation</keyword>
<keyword id="KW-0832">Ubl conjugation</keyword>
<keyword id="KW-0862">Zinc</keyword>
<keyword id="KW-0863">Zinc-finger</keyword>
<reference key="1">
    <citation type="journal article" date="2004" name="Genome Res.">
        <title>The status, quality, and expansion of the NIH full-length cDNA project: the Mammalian Gene Collection (MGC).</title>
        <authorList>
            <consortium name="The MGC Project Team"/>
        </authorList>
    </citation>
    <scope>NUCLEOTIDE SEQUENCE [LARGE SCALE MRNA]</scope>
    <source>
        <strain>C57BL/6J</strain>
        <tissue>Brain</tissue>
    </source>
</reference>
<organism>
    <name type="scientific">Mus musculus</name>
    <name type="common">Mouse</name>
    <dbReference type="NCBI Taxonomy" id="10090"/>
    <lineage>
        <taxon>Eukaryota</taxon>
        <taxon>Metazoa</taxon>
        <taxon>Chordata</taxon>
        <taxon>Craniata</taxon>
        <taxon>Vertebrata</taxon>
        <taxon>Euteleostomi</taxon>
        <taxon>Mammalia</taxon>
        <taxon>Eutheria</taxon>
        <taxon>Euarchontoglires</taxon>
        <taxon>Glires</taxon>
        <taxon>Rodentia</taxon>
        <taxon>Myomorpha</taxon>
        <taxon>Muroidea</taxon>
        <taxon>Muridae</taxon>
        <taxon>Murinae</taxon>
        <taxon>Mus</taxon>
        <taxon>Mus</taxon>
    </lineage>
</organism>
<dbReference type="EMBL" id="BC053084">
    <property type="protein sequence ID" value="AAH53084.1"/>
    <property type="molecule type" value="mRNA"/>
</dbReference>
<dbReference type="CCDS" id="CCDS26302.1"/>
<dbReference type="RefSeq" id="NP_898835.1">
    <property type="nucleotide sequence ID" value="NM_183014.1"/>
</dbReference>
<dbReference type="RefSeq" id="XP_006516659.1">
    <property type="nucleotide sequence ID" value="XM_006516596.5"/>
</dbReference>
<dbReference type="RefSeq" id="XP_006516660.1">
    <property type="nucleotide sequence ID" value="XM_006516597.5"/>
</dbReference>
<dbReference type="SMR" id="Q7TSH9"/>
<dbReference type="IntAct" id="Q7TSH9">
    <property type="interactions" value="1"/>
</dbReference>
<dbReference type="MINT" id="Q7TSH9"/>
<dbReference type="STRING" id="10090.ENSMUSP00000100043"/>
<dbReference type="iPTMnet" id="Q7TSH9"/>
<dbReference type="PhosphoSitePlus" id="Q7TSH9"/>
<dbReference type="jPOST" id="Q7TSH9"/>
<dbReference type="PaxDb" id="10090-ENSMUSP00000100043"/>
<dbReference type="ProteomicsDB" id="275003"/>
<dbReference type="DNASU" id="193452"/>
<dbReference type="Ensembl" id="ENSMUST00000006903.8">
    <property type="protein sequence ID" value="ENSMUSP00000006903.7"/>
    <property type="gene ID" value="ENSMUSG00000006720.17"/>
</dbReference>
<dbReference type="Ensembl" id="ENSMUST00000102978.8">
    <property type="protein sequence ID" value="ENSMUSP00000100043.2"/>
    <property type="gene ID" value="ENSMUSG00000006720.17"/>
</dbReference>
<dbReference type="Ensembl" id="ENSMUST00000176511.8">
    <property type="protein sequence ID" value="ENSMUSP00000135173.2"/>
    <property type="gene ID" value="ENSMUSG00000006720.17"/>
</dbReference>
<dbReference type="GeneID" id="193452"/>
<dbReference type="KEGG" id="mmu:193452"/>
<dbReference type="UCSC" id="uc007pry.1">
    <property type="organism name" value="mouse"/>
</dbReference>
<dbReference type="AGR" id="MGI:1922244"/>
<dbReference type="CTD" id="193452"/>
<dbReference type="MGI" id="MGI:1922244">
    <property type="gene designation" value="Zfp184"/>
</dbReference>
<dbReference type="VEuPathDB" id="HostDB:ENSMUSG00000006720"/>
<dbReference type="eggNOG" id="KOG1721">
    <property type="taxonomic scope" value="Eukaryota"/>
</dbReference>
<dbReference type="GeneTree" id="ENSGT00940000164849"/>
<dbReference type="HOGENOM" id="CLU_002678_0_9_1"/>
<dbReference type="InParanoid" id="Q7TSH9"/>
<dbReference type="OMA" id="TIPTWER"/>
<dbReference type="OrthoDB" id="9411774at2759"/>
<dbReference type="PhylomeDB" id="Q7TSH9"/>
<dbReference type="TreeFam" id="TF350822"/>
<dbReference type="Reactome" id="R-MMU-212436">
    <property type="pathway name" value="Generic Transcription Pathway"/>
</dbReference>
<dbReference type="BioGRID-ORCS" id="193452">
    <property type="hits" value="1 hit in 77 CRISPR screens"/>
</dbReference>
<dbReference type="ChiTaRS" id="Zfp184">
    <property type="organism name" value="mouse"/>
</dbReference>
<dbReference type="PRO" id="PR:Q7TSH9"/>
<dbReference type="Proteomes" id="UP000000589">
    <property type="component" value="Chromosome 13"/>
</dbReference>
<dbReference type="RNAct" id="Q7TSH9">
    <property type="molecule type" value="protein"/>
</dbReference>
<dbReference type="Bgee" id="ENSMUSG00000006720">
    <property type="expression patterns" value="Expressed in undifferentiated genital tubercle and 123 other cell types or tissues"/>
</dbReference>
<dbReference type="ExpressionAtlas" id="Q7TSH9">
    <property type="expression patterns" value="baseline and differential"/>
</dbReference>
<dbReference type="GO" id="GO:0005634">
    <property type="term" value="C:nucleus"/>
    <property type="evidence" value="ECO:0007669"/>
    <property type="project" value="UniProtKB-SubCell"/>
</dbReference>
<dbReference type="GO" id="GO:0003677">
    <property type="term" value="F:DNA binding"/>
    <property type="evidence" value="ECO:0007669"/>
    <property type="project" value="UniProtKB-KW"/>
</dbReference>
<dbReference type="GO" id="GO:0008270">
    <property type="term" value="F:zinc ion binding"/>
    <property type="evidence" value="ECO:0007669"/>
    <property type="project" value="UniProtKB-KW"/>
</dbReference>
<dbReference type="GO" id="GO:0006355">
    <property type="term" value="P:regulation of DNA-templated transcription"/>
    <property type="evidence" value="ECO:0007669"/>
    <property type="project" value="InterPro"/>
</dbReference>
<dbReference type="CDD" id="cd07765">
    <property type="entry name" value="KRAB_A-box"/>
    <property type="match status" value="1"/>
</dbReference>
<dbReference type="FunFam" id="3.30.160.60:FF:004137">
    <property type="match status" value="1"/>
</dbReference>
<dbReference type="FunFam" id="3.30.160.60:FF:000446">
    <property type="entry name" value="Zinc finger protein"/>
    <property type="match status" value="1"/>
</dbReference>
<dbReference type="FunFam" id="3.30.160.60:FF:000824">
    <property type="entry name" value="Zinc finger protein 184"/>
    <property type="match status" value="1"/>
</dbReference>
<dbReference type="FunFam" id="3.30.160.60:FF:001085">
    <property type="entry name" value="Zinc finger protein 184"/>
    <property type="match status" value="1"/>
</dbReference>
<dbReference type="FunFam" id="3.30.160.60:FF:001100">
    <property type="entry name" value="Zinc finger protein 184"/>
    <property type="match status" value="1"/>
</dbReference>
<dbReference type="FunFam" id="3.30.160.60:FF:000252">
    <property type="entry name" value="Zinc finger protein 287"/>
    <property type="match status" value="1"/>
</dbReference>
<dbReference type="FunFam" id="3.30.160.60:FF:002278">
    <property type="entry name" value="Zinc finger protein 320"/>
    <property type="match status" value="1"/>
</dbReference>
<dbReference type="FunFam" id="3.30.160.60:FF:002343">
    <property type="entry name" value="Zinc finger protein 33A"/>
    <property type="match status" value="2"/>
</dbReference>
<dbReference type="FunFam" id="3.30.160.60:FF:000690">
    <property type="entry name" value="Zinc finger protein 354C"/>
    <property type="match status" value="1"/>
</dbReference>
<dbReference type="FunFam" id="3.30.160.60:FF:000016">
    <property type="entry name" value="zinc finger protein 37 homolog"/>
    <property type="match status" value="2"/>
</dbReference>
<dbReference type="FunFam" id="3.30.160.60:FF:000060">
    <property type="entry name" value="zinc finger protein 436"/>
    <property type="match status" value="1"/>
</dbReference>
<dbReference type="FunFam" id="3.30.160.60:FF:000519">
    <property type="entry name" value="Zinc finger protein 470"/>
    <property type="match status" value="1"/>
</dbReference>
<dbReference type="FunFam" id="3.30.160.60:FF:002090">
    <property type="entry name" value="Zinc finger protein 473"/>
    <property type="match status" value="3"/>
</dbReference>
<dbReference type="FunFam" id="3.30.160.60:FF:000737">
    <property type="entry name" value="Zinc finger protein 565"/>
    <property type="match status" value="1"/>
</dbReference>
<dbReference type="FunFam" id="3.30.160.60:FF:001343">
    <property type="entry name" value="Zinc finger protein 568"/>
    <property type="match status" value="1"/>
</dbReference>
<dbReference type="FunFam" id="3.30.160.60:FF:000624">
    <property type="entry name" value="zinc finger protein 697"/>
    <property type="match status" value="1"/>
</dbReference>
<dbReference type="Gene3D" id="6.10.140.140">
    <property type="match status" value="1"/>
</dbReference>
<dbReference type="Gene3D" id="3.30.160.60">
    <property type="entry name" value="Classic Zinc Finger"/>
    <property type="match status" value="19"/>
</dbReference>
<dbReference type="InterPro" id="IPR001909">
    <property type="entry name" value="KRAB"/>
</dbReference>
<dbReference type="InterPro" id="IPR036051">
    <property type="entry name" value="KRAB_dom_sf"/>
</dbReference>
<dbReference type="InterPro" id="IPR050758">
    <property type="entry name" value="Znf_C2H2-type"/>
</dbReference>
<dbReference type="InterPro" id="IPR036236">
    <property type="entry name" value="Znf_C2H2_sf"/>
</dbReference>
<dbReference type="InterPro" id="IPR013087">
    <property type="entry name" value="Znf_C2H2_type"/>
</dbReference>
<dbReference type="PANTHER" id="PTHR23234:SF8">
    <property type="entry name" value="C2H2-TYPE DOMAIN-CONTAINING PROTEIN"/>
    <property type="match status" value="1"/>
</dbReference>
<dbReference type="PANTHER" id="PTHR23234">
    <property type="entry name" value="ZNF44 PROTEIN"/>
    <property type="match status" value="1"/>
</dbReference>
<dbReference type="Pfam" id="PF01352">
    <property type="entry name" value="KRAB"/>
    <property type="match status" value="1"/>
</dbReference>
<dbReference type="Pfam" id="PF00096">
    <property type="entry name" value="zf-C2H2"/>
    <property type="match status" value="15"/>
</dbReference>
<dbReference type="Pfam" id="PF13465">
    <property type="entry name" value="zf-H2C2_2"/>
    <property type="match status" value="1"/>
</dbReference>
<dbReference type="SMART" id="SM00349">
    <property type="entry name" value="KRAB"/>
    <property type="match status" value="1"/>
</dbReference>
<dbReference type="SMART" id="SM00355">
    <property type="entry name" value="ZnF_C2H2"/>
    <property type="match status" value="19"/>
</dbReference>
<dbReference type="SUPFAM" id="SSF57667">
    <property type="entry name" value="beta-beta-alpha zinc fingers"/>
    <property type="match status" value="10"/>
</dbReference>
<dbReference type="SUPFAM" id="SSF109640">
    <property type="entry name" value="KRAB domain (Kruppel-associated box)"/>
    <property type="match status" value="1"/>
</dbReference>
<dbReference type="PROSITE" id="PS50805">
    <property type="entry name" value="KRAB"/>
    <property type="match status" value="1"/>
</dbReference>
<dbReference type="PROSITE" id="PS00028">
    <property type="entry name" value="ZINC_FINGER_C2H2_1"/>
    <property type="match status" value="18"/>
</dbReference>
<dbReference type="PROSITE" id="PS50157">
    <property type="entry name" value="ZINC_FINGER_C2H2_2"/>
    <property type="match status" value="19"/>
</dbReference>
<accession>Q7TSH9</accession>
<evidence type="ECO:0000250" key="1"/>
<evidence type="ECO:0000250" key="2">
    <source>
        <dbReference type="UniProtKB" id="Q99676"/>
    </source>
</evidence>
<evidence type="ECO:0000255" key="3">
    <source>
        <dbReference type="PROSITE-ProRule" id="PRU00042"/>
    </source>
</evidence>
<evidence type="ECO:0000255" key="4">
    <source>
        <dbReference type="PROSITE-ProRule" id="PRU00119"/>
    </source>
</evidence>
<evidence type="ECO:0000305" key="5"/>